<dbReference type="EC" id="2.4.2.59" evidence="1"/>
<dbReference type="EMBL" id="AP006878">
    <property type="protein sequence ID" value="BAD84623.1"/>
    <property type="molecule type" value="Genomic_DNA"/>
</dbReference>
<dbReference type="RefSeq" id="WP_011249389.1">
    <property type="nucleotide sequence ID" value="NC_006624.1"/>
</dbReference>
<dbReference type="SMR" id="Q5JD25"/>
<dbReference type="FunCoup" id="Q5JD25">
    <property type="interactions" value="72"/>
</dbReference>
<dbReference type="STRING" id="69014.TK0434"/>
<dbReference type="EnsemblBacteria" id="BAD84623">
    <property type="protein sequence ID" value="BAD84623"/>
    <property type="gene ID" value="TK0434"/>
</dbReference>
<dbReference type="GeneID" id="78446944"/>
<dbReference type="KEGG" id="tko:TK0434"/>
<dbReference type="PATRIC" id="fig|69014.16.peg.426"/>
<dbReference type="eggNOG" id="arCOG00574">
    <property type="taxonomic scope" value="Archaea"/>
</dbReference>
<dbReference type="HOGENOM" id="CLU_053727_2_0_2"/>
<dbReference type="InParanoid" id="Q5JD25"/>
<dbReference type="OrthoDB" id="4240at2157"/>
<dbReference type="PhylomeDB" id="Q5JD25"/>
<dbReference type="UniPathway" id="UPA00060"/>
<dbReference type="Proteomes" id="UP000000536">
    <property type="component" value="Chromosome"/>
</dbReference>
<dbReference type="GO" id="GO:0005506">
    <property type="term" value="F:iron ion binding"/>
    <property type="evidence" value="ECO:0000318"/>
    <property type="project" value="GO_Central"/>
</dbReference>
<dbReference type="GO" id="GO:0016763">
    <property type="term" value="F:pentosyltransferase activity"/>
    <property type="evidence" value="ECO:0007669"/>
    <property type="project" value="UniProtKB-UniRule"/>
</dbReference>
<dbReference type="GO" id="GO:0009228">
    <property type="term" value="P:thiamine biosynthetic process"/>
    <property type="evidence" value="ECO:0007669"/>
    <property type="project" value="UniProtKB-KW"/>
</dbReference>
<dbReference type="GO" id="GO:0009229">
    <property type="term" value="P:thiamine diphosphate biosynthetic process"/>
    <property type="evidence" value="ECO:0007669"/>
    <property type="project" value="UniProtKB-UniRule"/>
</dbReference>
<dbReference type="GO" id="GO:0052837">
    <property type="term" value="P:thiazole biosynthetic process"/>
    <property type="evidence" value="ECO:0000318"/>
    <property type="project" value="GO_Central"/>
</dbReference>
<dbReference type="Gene3D" id="3.50.50.60">
    <property type="entry name" value="FAD/NAD(P)-binding domain"/>
    <property type="match status" value="1"/>
</dbReference>
<dbReference type="HAMAP" id="MF_00304">
    <property type="entry name" value="Thi4"/>
    <property type="match status" value="1"/>
</dbReference>
<dbReference type="InterPro" id="IPR036188">
    <property type="entry name" value="FAD/NAD-bd_sf"/>
</dbReference>
<dbReference type="InterPro" id="IPR002922">
    <property type="entry name" value="Thi4_fam"/>
</dbReference>
<dbReference type="InterPro" id="IPR022828">
    <property type="entry name" value="Thi4_prok"/>
</dbReference>
<dbReference type="NCBIfam" id="TIGR00292">
    <property type="entry name" value="sulfide-dependent adenosine diphosphate thiazole synthase"/>
    <property type="match status" value="1"/>
</dbReference>
<dbReference type="PANTHER" id="PTHR43422">
    <property type="entry name" value="THIAMINE THIAZOLE SYNTHASE"/>
    <property type="match status" value="1"/>
</dbReference>
<dbReference type="PANTHER" id="PTHR43422:SF3">
    <property type="entry name" value="THIAMINE THIAZOLE SYNTHASE"/>
    <property type="match status" value="1"/>
</dbReference>
<dbReference type="Pfam" id="PF01946">
    <property type="entry name" value="Thi4"/>
    <property type="match status" value="1"/>
</dbReference>
<dbReference type="PRINTS" id="PR00419">
    <property type="entry name" value="ADXRDTASE"/>
</dbReference>
<dbReference type="SUPFAM" id="SSF51905">
    <property type="entry name" value="FAD/NAD(P)-binding domain"/>
    <property type="match status" value="1"/>
</dbReference>
<name>THI4_THEKO</name>
<keyword id="KW-0408">Iron</keyword>
<keyword id="KW-0479">Metal-binding</keyword>
<keyword id="KW-0520">NAD</keyword>
<keyword id="KW-1185">Reference proteome</keyword>
<keyword id="KW-0784">Thiamine biosynthesis</keyword>
<keyword id="KW-0808">Transferase</keyword>
<organism>
    <name type="scientific">Thermococcus kodakarensis (strain ATCC BAA-918 / JCM 12380 / KOD1)</name>
    <name type="common">Pyrococcus kodakaraensis (strain KOD1)</name>
    <dbReference type="NCBI Taxonomy" id="69014"/>
    <lineage>
        <taxon>Archaea</taxon>
        <taxon>Methanobacteriati</taxon>
        <taxon>Methanobacteriota</taxon>
        <taxon>Thermococci</taxon>
        <taxon>Thermococcales</taxon>
        <taxon>Thermococcaceae</taxon>
        <taxon>Thermococcus</taxon>
    </lineage>
</organism>
<protein>
    <recommendedName>
        <fullName evidence="1">Thiamine thiazole synthase</fullName>
        <ecNumber evidence="1">2.4.2.59</ecNumber>
    </recommendedName>
</protein>
<gene>
    <name evidence="1" type="primary">thi4</name>
    <name type="ordered locus">TK0434</name>
</gene>
<feature type="chain" id="PRO_0000153954" description="Thiamine thiazole synthase">
    <location>
        <begin position="1"/>
        <end position="251"/>
    </location>
</feature>
<feature type="binding site" description="in other chain" evidence="1">
    <location>
        <position position="34"/>
    </location>
    <ligand>
        <name>NAD(+)</name>
        <dbReference type="ChEBI" id="CHEBI:57540"/>
        <note>ligand shared between two adjacent protomers</note>
    </ligand>
</feature>
<feature type="binding site" description="in other chain" evidence="1">
    <location>
        <begin position="53"/>
        <end position="54"/>
    </location>
    <ligand>
        <name>NAD(+)</name>
        <dbReference type="ChEBI" id="CHEBI:57540"/>
        <note>ligand shared between two adjacent protomers</note>
    </ligand>
</feature>
<feature type="binding site" description="in other chain" evidence="1">
    <location>
        <position position="61"/>
    </location>
    <ligand>
        <name>NAD(+)</name>
        <dbReference type="ChEBI" id="CHEBI:57540"/>
        <note>ligand shared between two adjacent protomers</note>
    </ligand>
</feature>
<feature type="binding site" description="in other chain" evidence="1">
    <location>
        <position position="125"/>
    </location>
    <ligand>
        <name>NAD(+)</name>
        <dbReference type="ChEBI" id="CHEBI:57540"/>
        <note>ligand shared between two adjacent protomers</note>
    </ligand>
</feature>
<feature type="binding site" evidence="1">
    <location>
        <begin position="151"/>
        <end position="153"/>
    </location>
    <ligand>
        <name>NAD(+)</name>
        <dbReference type="ChEBI" id="CHEBI:57540"/>
        <note>ligand shared between two adjacent protomers</note>
    </ligand>
</feature>
<feature type="binding site" evidence="1">
    <location>
        <position position="153"/>
    </location>
    <ligand>
        <name>Fe cation</name>
        <dbReference type="ChEBI" id="CHEBI:24875"/>
        <note>ligand shared between two adjacent protomers</note>
    </ligand>
</feature>
<feature type="binding site" description="in other chain" evidence="1">
    <location>
        <position position="168"/>
    </location>
    <ligand>
        <name>Fe cation</name>
        <dbReference type="ChEBI" id="CHEBI:24875"/>
        <note>ligand shared between two adjacent protomers</note>
    </ligand>
</feature>
<feature type="binding site" description="in other chain" evidence="1">
    <location>
        <position position="216"/>
    </location>
    <ligand>
        <name>NAD(+)</name>
        <dbReference type="ChEBI" id="CHEBI:57540"/>
        <note>ligand shared between two adjacent protomers</note>
    </ligand>
</feature>
<feature type="binding site" evidence="1">
    <location>
        <position position="226"/>
    </location>
    <ligand>
        <name>glycine</name>
        <dbReference type="ChEBI" id="CHEBI:57305"/>
    </ligand>
</feature>
<accession>Q5JD25</accession>
<proteinExistence type="inferred from homology"/>
<evidence type="ECO:0000255" key="1">
    <source>
        <dbReference type="HAMAP-Rule" id="MF_00304"/>
    </source>
</evidence>
<evidence type="ECO:0000305" key="2">
    <source>
    </source>
</evidence>
<reference key="1">
    <citation type="journal article" date="2005" name="Genome Res.">
        <title>Complete genome sequence of the hyperthermophilic archaeon Thermococcus kodakaraensis KOD1 and comparison with Pyrococcus genomes.</title>
        <authorList>
            <person name="Fukui T."/>
            <person name="Atomi H."/>
            <person name="Kanai T."/>
            <person name="Matsumi R."/>
            <person name="Fujiwara S."/>
            <person name="Imanaka T."/>
        </authorList>
    </citation>
    <scope>NUCLEOTIDE SEQUENCE [LARGE SCALE GENOMIC DNA]</scope>
    <source>
        <strain>ATCC BAA-918 / JCM 12380 / KOD1</strain>
    </source>
</reference>
<reference key="2">
    <citation type="journal article" date="2007" name="Science">
        <title>Archaeal type III RuBisCOs function in a pathway for AMP metabolism.</title>
        <authorList>
            <person name="Sato T."/>
            <person name="Atomi H."/>
            <person name="Imanaka T."/>
        </authorList>
    </citation>
    <scope>LACK OF RIBOSE BISPHOSPHATE ISOMERASE ACTIVITY</scope>
    <source>
        <strain>ATCC BAA-918 / JCM 12380 / KOD1</strain>
    </source>
</reference>
<sequence length="251" mass="26641">MREIEISRAIVEAYFNDLLQNLQLDIAIVGAGPSGMVAGYYLAKGGAKVAIFEKKLSVGGGIWGGAMGFNRVVVQESAREILDEFGVDYSQVGNGLYVLDSIELASTLASKAVKAGAKIFNMVEVEDLVVKDGRVSGLVINWTPVMMTGLHVDPLTVEAKFVVDSTGHGAQISQHLLKRGLIKAIPGEGPMWAEKGEELTVEHTREVFPGLYATGMAANALAGAPRMGPIFGGMLLSGRKAALEILQKLGK</sequence>
<comment type="function">
    <text evidence="1">Involved in the biosynthesis of the thiazole moiety of thiamine. Catalyzes the conversion of NAD and glycine to adenosine diphosphate 5-(2-hydroxyethyl)-4-methylthiazole-2-carboxylate (ADT), an adenylated thiazole intermediate, using free sulfide as a source of sulfur.</text>
</comment>
<comment type="catalytic activity">
    <reaction evidence="1">
        <text>hydrogen sulfide + glycine + NAD(+) = ADP-5-ethyl-4-methylthiazole-2-carboxylate + nicotinamide + 3 H2O + H(+)</text>
        <dbReference type="Rhea" id="RHEA:55704"/>
        <dbReference type="ChEBI" id="CHEBI:15377"/>
        <dbReference type="ChEBI" id="CHEBI:15378"/>
        <dbReference type="ChEBI" id="CHEBI:17154"/>
        <dbReference type="ChEBI" id="CHEBI:29919"/>
        <dbReference type="ChEBI" id="CHEBI:57305"/>
        <dbReference type="ChEBI" id="CHEBI:57540"/>
        <dbReference type="ChEBI" id="CHEBI:139151"/>
        <dbReference type="EC" id="2.4.2.59"/>
    </reaction>
</comment>
<comment type="cofactor">
    <cofactor evidence="1">
        <name>Fe(2+)</name>
        <dbReference type="ChEBI" id="CHEBI:29033"/>
    </cofactor>
</comment>
<comment type="pathway">
    <text evidence="1">Cofactor biosynthesis; thiamine diphosphate biosynthesis.</text>
</comment>
<comment type="subunit">
    <text evidence="1">Homooctamer; tetramer of dimers.</text>
</comment>
<comment type="similarity">
    <text evidence="1">Belongs to the THI4 family.</text>
</comment>
<comment type="caution">
    <text evidence="2">Despite the fact that this protein belongs to a subfamily proposed to have ribose 1,5-bisphosphate isomerase activity (PubMed:15375115), the recombinant protein does not possess this activity (PubMed:17303759). In contrast, another protein from P.kodakaraensis has been shown to display this activity (TK0185).</text>
</comment>